<name>GAL1_CANMA</name>
<evidence type="ECO:0000250" key="1">
    <source>
        <dbReference type="UniProtKB" id="P04385"/>
    </source>
</evidence>
<evidence type="ECO:0000250" key="2">
    <source>
        <dbReference type="UniProtKB" id="Q9HHB6"/>
    </source>
</evidence>
<evidence type="ECO:0000305" key="3"/>
<feature type="chain" id="PRO_0000184653" description="Galactokinase">
    <location>
        <begin position="1"/>
        <end position="214" status="greater than"/>
    </location>
</feature>
<feature type="active site" description="Proton acceptor" evidence="2">
    <location>
        <position position="199"/>
    </location>
</feature>
<feature type="binding site" evidence="1">
    <location>
        <position position="47"/>
    </location>
    <ligand>
        <name>alpha-D-galactose</name>
        <dbReference type="ChEBI" id="CHEBI:28061"/>
    </ligand>
</feature>
<feature type="binding site" evidence="1">
    <location>
        <position position="53"/>
    </location>
    <ligand>
        <name>alpha-D-galactose</name>
        <dbReference type="ChEBI" id="CHEBI:28061"/>
    </ligand>
</feature>
<feature type="binding site" evidence="1">
    <location>
        <position position="54"/>
    </location>
    <ligand>
        <name>alpha-D-galactose</name>
        <dbReference type="ChEBI" id="CHEBI:28061"/>
    </ligand>
</feature>
<feature type="binding site" evidence="1">
    <location>
        <position position="56"/>
    </location>
    <ligand>
        <name>alpha-D-galactose</name>
        <dbReference type="ChEBI" id="CHEBI:28061"/>
    </ligand>
</feature>
<feature type="binding site" evidence="1">
    <location>
        <position position="149"/>
    </location>
    <ligand>
        <name>ATP</name>
        <dbReference type="ChEBI" id="CHEBI:30616"/>
    </ligand>
</feature>
<feature type="binding site" evidence="1">
    <location>
        <position position="151"/>
    </location>
    <ligand>
        <name>ATP</name>
        <dbReference type="ChEBI" id="CHEBI:30616"/>
    </ligand>
</feature>
<feature type="binding site" evidence="1">
    <location>
        <position position="153"/>
    </location>
    <ligand>
        <name>ATP</name>
        <dbReference type="ChEBI" id="CHEBI:30616"/>
    </ligand>
</feature>
<feature type="binding site" evidence="1">
    <location>
        <position position="154"/>
    </location>
    <ligand>
        <name>ATP</name>
        <dbReference type="ChEBI" id="CHEBI:30616"/>
    </ligand>
</feature>
<feature type="binding site" evidence="1">
    <location>
        <position position="199"/>
    </location>
    <ligand>
        <name>alpha-D-galactose</name>
        <dbReference type="ChEBI" id="CHEBI:28061"/>
    </ligand>
</feature>
<feature type="site" description="Transition state stabilizer" evidence="2">
    <location>
        <position position="47"/>
    </location>
</feature>
<feature type="non-terminal residue">
    <location>
        <position position="214"/>
    </location>
</feature>
<reference key="1">
    <citation type="journal article" date="1997" name="Yeast">
        <title>Galactose-inducible expression systems in Candida maltosa using promoters of newly-isolated GAL1 and GAL10 genes.</title>
        <authorList>
            <person name="Park S.M."/>
            <person name="Ohkuma M."/>
            <person name="Masuda Y."/>
            <person name="Ohta A."/>
            <person name="Takagi M."/>
        </authorList>
    </citation>
    <scope>NUCLEOTIDE SEQUENCE [GENOMIC DNA]</scope>
    <source>
        <strain>ATCC 28140 / CBS 5611 / IAM 12247 / JCM 1504 / NBRC 1977</strain>
    </source>
</reference>
<comment type="function">
    <text evidence="1">Galactokinase is a key enzyme in the galactose metabolism where it catalyzes the conversion of alpha-D-galactose to galactose 1-phosphate (By similarity). Can also induce the transcription of the gal genes in response to the organism being challenged with galactose as the sole source of carbon (By similarity).</text>
</comment>
<comment type="catalytic activity">
    <reaction evidence="1">
        <text>alpha-D-galactose + ATP = alpha-D-galactose 1-phosphate + ADP + H(+)</text>
        <dbReference type="Rhea" id="RHEA:13553"/>
        <dbReference type="ChEBI" id="CHEBI:15378"/>
        <dbReference type="ChEBI" id="CHEBI:28061"/>
        <dbReference type="ChEBI" id="CHEBI:30616"/>
        <dbReference type="ChEBI" id="CHEBI:58336"/>
        <dbReference type="ChEBI" id="CHEBI:456216"/>
        <dbReference type="EC" id="2.7.1.6"/>
    </reaction>
    <physiologicalReaction direction="left-to-right" evidence="1">
        <dbReference type="Rhea" id="RHEA:13554"/>
    </physiologicalReaction>
</comment>
<comment type="pathway">
    <text evidence="1">Carbohydrate metabolism; galactose metabolism.</text>
</comment>
<comment type="similarity">
    <text evidence="3">Belongs to the GHMP kinase family. GalK subfamily.</text>
</comment>
<dbReference type="EC" id="2.7.1.6" evidence="1"/>
<dbReference type="EMBL" id="D29759">
    <property type="status" value="NOT_ANNOTATED_CDS"/>
    <property type="molecule type" value="Genomic_DNA"/>
</dbReference>
<dbReference type="SMR" id="P56599"/>
<dbReference type="UniPathway" id="UPA00214"/>
<dbReference type="GO" id="GO:0005829">
    <property type="term" value="C:cytosol"/>
    <property type="evidence" value="ECO:0007669"/>
    <property type="project" value="TreeGrafter"/>
</dbReference>
<dbReference type="GO" id="GO:0005524">
    <property type="term" value="F:ATP binding"/>
    <property type="evidence" value="ECO:0007669"/>
    <property type="project" value="UniProtKB-KW"/>
</dbReference>
<dbReference type="GO" id="GO:0004335">
    <property type="term" value="F:galactokinase activity"/>
    <property type="evidence" value="ECO:0007669"/>
    <property type="project" value="UniProtKB-EC"/>
</dbReference>
<dbReference type="GO" id="GO:0006012">
    <property type="term" value="P:galactose metabolic process"/>
    <property type="evidence" value="ECO:0007669"/>
    <property type="project" value="UniProtKB-UniPathway"/>
</dbReference>
<dbReference type="FunFam" id="3.30.230.10:FF:000056">
    <property type="entry name" value="GAL1p Galactokinase"/>
    <property type="match status" value="1"/>
</dbReference>
<dbReference type="Gene3D" id="3.30.230.10">
    <property type="match status" value="1"/>
</dbReference>
<dbReference type="InterPro" id="IPR000705">
    <property type="entry name" value="Galactokinase"/>
</dbReference>
<dbReference type="InterPro" id="IPR019741">
    <property type="entry name" value="Galactokinase_CS"/>
</dbReference>
<dbReference type="InterPro" id="IPR019539">
    <property type="entry name" value="GalKase_N"/>
</dbReference>
<dbReference type="InterPro" id="IPR006204">
    <property type="entry name" value="GHMP_kinase_N_dom"/>
</dbReference>
<dbReference type="InterPro" id="IPR006203">
    <property type="entry name" value="GHMP_knse_ATP-bd_CS"/>
</dbReference>
<dbReference type="InterPro" id="IPR020568">
    <property type="entry name" value="Ribosomal_Su5_D2-typ_SF"/>
</dbReference>
<dbReference type="InterPro" id="IPR014721">
    <property type="entry name" value="Ribsml_uS5_D2-typ_fold_subgr"/>
</dbReference>
<dbReference type="PANTHER" id="PTHR10457:SF7">
    <property type="entry name" value="GALACTOKINASE-RELATED"/>
    <property type="match status" value="1"/>
</dbReference>
<dbReference type="PANTHER" id="PTHR10457">
    <property type="entry name" value="MEVALONATE KINASE/GALACTOKINASE"/>
    <property type="match status" value="1"/>
</dbReference>
<dbReference type="Pfam" id="PF10509">
    <property type="entry name" value="GalKase_gal_bdg"/>
    <property type="match status" value="1"/>
</dbReference>
<dbReference type="Pfam" id="PF00288">
    <property type="entry name" value="GHMP_kinases_N"/>
    <property type="match status" value="1"/>
</dbReference>
<dbReference type="PRINTS" id="PR00473">
    <property type="entry name" value="GALCTOKINASE"/>
</dbReference>
<dbReference type="PRINTS" id="PR00959">
    <property type="entry name" value="MEVGALKINASE"/>
</dbReference>
<dbReference type="SUPFAM" id="SSF54211">
    <property type="entry name" value="Ribosomal protein S5 domain 2-like"/>
    <property type="match status" value="1"/>
</dbReference>
<dbReference type="PROSITE" id="PS00106">
    <property type="entry name" value="GALACTOKINASE"/>
    <property type="match status" value="1"/>
</dbReference>
<dbReference type="PROSITE" id="PS00627">
    <property type="entry name" value="GHMP_KINASES_ATP"/>
    <property type="match status" value="1"/>
</dbReference>
<protein>
    <recommendedName>
        <fullName evidence="1">Galactokinase</fullName>
        <ecNumber evidence="1">2.7.1.6</ecNumber>
    </recommendedName>
    <alternativeName>
        <fullName evidence="1">Galactose kinase</fullName>
    </alternativeName>
</protein>
<accession>P56599</accession>
<organism>
    <name type="scientific">Candida maltosa</name>
    <name type="common">Yeast</name>
    <dbReference type="NCBI Taxonomy" id="5479"/>
    <lineage>
        <taxon>Eukaryota</taxon>
        <taxon>Fungi</taxon>
        <taxon>Dikarya</taxon>
        <taxon>Ascomycota</taxon>
        <taxon>Saccharomycotina</taxon>
        <taxon>Pichiomycetes</taxon>
        <taxon>Debaryomycetaceae</taxon>
        <taxon>Candida/Lodderomyces clade</taxon>
        <taxon>Candida</taxon>
    </lineage>
</organism>
<gene>
    <name evidence="1" type="primary">GAL1</name>
</gene>
<keyword id="KW-0067">ATP-binding</keyword>
<keyword id="KW-0119">Carbohydrate metabolism</keyword>
<keyword id="KW-0299">Galactose metabolism</keyword>
<keyword id="KW-0418">Kinase</keyword>
<keyword id="KW-0547">Nucleotide-binding</keyword>
<keyword id="KW-0808">Transferase</keyword>
<sequence length="214" mass="23418">MSISTVDDLSFYSNVEPNQQRFTEVVKTFQTNFPGDDITFFARSPGRVNLIGDHIDYNFFPVLPMAIANDVIAAVNVNSTNEIIITNTDSKDFLKEVIALRNSQIDQEHHSWANYFKCALIVAKQYLEERGVTSLKGMKLTFNGNVPTGGGLSSSAAFCVASTLAIIRANGITDLTKQDLTRITVVSEHYVGVNTGGMDQCASVCGEPDKLLLI</sequence>
<proteinExistence type="inferred from homology"/>